<keyword id="KW-0067">ATP-binding</keyword>
<keyword id="KW-0997">Cell inner membrane</keyword>
<keyword id="KW-1003">Cell membrane</keyword>
<keyword id="KW-0418">Kinase</keyword>
<keyword id="KW-0472">Membrane</keyword>
<keyword id="KW-0547">Nucleotide-binding</keyword>
<keyword id="KW-0597">Phosphoprotein</keyword>
<keyword id="KW-1185">Reference proteome</keyword>
<keyword id="KW-0808">Transferase</keyword>
<keyword id="KW-0812">Transmembrane</keyword>
<keyword id="KW-1133">Transmembrane helix</keyword>
<keyword id="KW-0902">Two-component regulatory system</keyword>
<organism>
    <name type="scientific">Escherichia coli O157:H7</name>
    <dbReference type="NCBI Taxonomy" id="83334"/>
    <lineage>
        <taxon>Bacteria</taxon>
        <taxon>Pseudomonadati</taxon>
        <taxon>Pseudomonadota</taxon>
        <taxon>Gammaproteobacteria</taxon>
        <taxon>Enterobacterales</taxon>
        <taxon>Enterobacteriaceae</taxon>
        <taxon>Escherichia</taxon>
    </lineage>
</organism>
<gene>
    <name type="primary">qseE</name>
    <name type="synonym">yfhK</name>
    <name type="ordered locus">Z3833</name>
    <name type="ordered locus">ECs3422</name>
</gene>
<protein>
    <recommendedName>
        <fullName>Sensor histidine kinase QseE</fullName>
        <ecNumber>2.7.13.3</ecNumber>
    </recommendedName>
    <alternativeName>
        <fullName>Quorum-sensing regulator protein E</fullName>
    </alternativeName>
</protein>
<sequence length="475" mass="53293">MKRWPVFPRSLRQLVMLAFLLILLPLLVLAWQAWQSLNALSDQAALVNRTTLIDARRSEAMTNAALEMERSYRQYCVLDDPTLAKVYQSQRKRYSEMLDAHAGVLPDDKLYQALRQDLNNLAQLQCNNSGPDAAAAARLEAFASANTEMVQATRTVVFSRGQQLQREIAERGQYFGWQSLVLFLVSLVMVLLFTRMIIGPVKNIERMINRLGEGRSLGNSVSFSGPSELRSVGQRILWLSERLSWLESQRHQFLRHLSHELKTPLASMREGTELLADQVVGPLTPEQKEVVSILDSSSRNLQKLIEQLLDYNRKQADSAVELDNVELAPLVETVVSAHSLPARAKMMHTDVDLKATACLAEPMLLMSVLDNLYSNAVHYGAESGNICLRSSLHGARVYIDVINTGTPIPQEERAMIFEPFFQGSHQRKGAVKGSGLGLSIARDCIRRMQGELYLVDESGQDVCFRIELPSSKNTK</sequence>
<evidence type="ECO:0000255" key="1"/>
<evidence type="ECO:0000255" key="2">
    <source>
        <dbReference type="PROSITE-ProRule" id="PRU00107"/>
    </source>
</evidence>
<evidence type="ECO:0000269" key="3">
    <source>
    </source>
</evidence>
<evidence type="ECO:0000269" key="4">
    <source>
    </source>
</evidence>
<evidence type="ECO:0000269" key="5">
    <source>
    </source>
</evidence>
<evidence type="ECO:0000305" key="6"/>
<evidence type="ECO:0000305" key="7">
    <source>
    </source>
</evidence>
<name>QSEE_ECO57</name>
<feature type="chain" id="PRO_0000413889" description="Sensor histidine kinase QseE">
    <location>
        <begin position="1"/>
        <end position="475"/>
    </location>
</feature>
<feature type="topological domain" description="Cytoplasmic" evidence="1">
    <location>
        <begin position="1"/>
        <end position="13"/>
    </location>
</feature>
<feature type="transmembrane region" description="Helical" evidence="1">
    <location>
        <begin position="14"/>
        <end position="34"/>
    </location>
</feature>
<feature type="topological domain" description="Periplasmic" evidence="1">
    <location>
        <begin position="35"/>
        <end position="173"/>
    </location>
</feature>
<feature type="transmembrane region" description="Helical" evidence="1">
    <location>
        <begin position="174"/>
        <end position="194"/>
    </location>
</feature>
<feature type="topological domain" description="Cytoplasmic" evidence="1">
    <location>
        <begin position="195"/>
        <end position="475"/>
    </location>
</feature>
<feature type="domain" description="Histidine kinase" evidence="2">
    <location>
        <begin position="256"/>
        <end position="472"/>
    </location>
</feature>
<feature type="modified residue" description="Phosphohistidine; by autocatalysis" evidence="2">
    <location>
        <position position="259"/>
    </location>
</feature>
<comment type="function">
    <text evidence="3 4 5">Member of the two-component regulatory system QseF/QseE involved in the regulation of virulence and metabolism in EHEC. Required for pedestal formation in host epithelial cells during infection. Autophosphorylates in response to epinephrine, sulfate or phosphate and then probably transfers its phosphate group to QseF.</text>
</comment>
<comment type="catalytic activity">
    <reaction>
        <text>ATP + protein L-histidine = ADP + protein N-phospho-L-histidine.</text>
        <dbReference type="EC" id="2.7.13.3"/>
    </reaction>
</comment>
<comment type="subcellular location">
    <subcellularLocation>
        <location evidence="7">Cell inner membrane</location>
        <topology evidence="7">Multi-pass membrane protein</topology>
    </subcellularLocation>
</comment>
<comment type="induction">
    <text evidence="3">Induced by epinephrine during late exponential growth, probably via the QseC sensor.</text>
</comment>
<comment type="PTM">
    <text>Autophosphorylated.</text>
</comment>
<comment type="disruption phenotype">
    <text evidence="3">Mutants can still form pedestals.</text>
</comment>
<comment type="sequence caution" evidence="6">
    <conflict type="erroneous initiation">
        <sequence resource="EMBL-CDS" id="AAG57670"/>
    </conflict>
    <text>Extended N-terminus.</text>
</comment>
<comment type="sequence caution" evidence="6">
    <conflict type="erroneous initiation">
        <sequence resource="EMBL-CDS" id="BAB36845"/>
    </conflict>
    <text>Extended N-terminus.</text>
</comment>
<proteinExistence type="evidence at protein level"/>
<accession>Q8XA47</accession>
<accession>Q7ABK5</accession>
<dbReference type="EC" id="2.7.13.3"/>
<dbReference type="EMBL" id="AE005174">
    <property type="protein sequence ID" value="AAG57670.1"/>
    <property type="status" value="ALT_INIT"/>
    <property type="molecule type" value="Genomic_DNA"/>
</dbReference>
<dbReference type="EMBL" id="BA000007">
    <property type="protein sequence ID" value="BAB36845.1"/>
    <property type="status" value="ALT_INIT"/>
    <property type="molecule type" value="Genomic_DNA"/>
</dbReference>
<dbReference type="PIR" id="B85901">
    <property type="entry name" value="B85901"/>
</dbReference>
<dbReference type="PIR" id="F91056">
    <property type="entry name" value="F91056"/>
</dbReference>
<dbReference type="RefSeq" id="NP_311449.1">
    <property type="nucleotide sequence ID" value="NC_002695.1"/>
</dbReference>
<dbReference type="RefSeq" id="WP_001301750.1">
    <property type="nucleotide sequence ID" value="NZ_VOAI01000001.1"/>
</dbReference>
<dbReference type="SMR" id="Q8XA47"/>
<dbReference type="STRING" id="155864.Z3833"/>
<dbReference type="KEGG" id="ece:Z3833"/>
<dbReference type="KEGG" id="ecs:ECs_3422"/>
<dbReference type="PATRIC" id="fig|386585.9.peg.3576"/>
<dbReference type="eggNOG" id="COG2205">
    <property type="taxonomic scope" value="Bacteria"/>
</dbReference>
<dbReference type="HOGENOM" id="CLU_000445_89_23_6"/>
<dbReference type="OMA" id="IAQDCIK"/>
<dbReference type="PHI-base" id="PHI:12149"/>
<dbReference type="Proteomes" id="UP000000558">
    <property type="component" value="Chromosome"/>
</dbReference>
<dbReference type="Proteomes" id="UP000002519">
    <property type="component" value="Chromosome"/>
</dbReference>
<dbReference type="GO" id="GO:0005886">
    <property type="term" value="C:plasma membrane"/>
    <property type="evidence" value="ECO:0007669"/>
    <property type="project" value="UniProtKB-SubCell"/>
</dbReference>
<dbReference type="GO" id="GO:0005524">
    <property type="term" value="F:ATP binding"/>
    <property type="evidence" value="ECO:0007669"/>
    <property type="project" value="UniProtKB-KW"/>
</dbReference>
<dbReference type="GO" id="GO:0000156">
    <property type="term" value="F:phosphorelay response regulator activity"/>
    <property type="evidence" value="ECO:0007669"/>
    <property type="project" value="TreeGrafter"/>
</dbReference>
<dbReference type="GO" id="GO:0000155">
    <property type="term" value="F:phosphorelay sensor kinase activity"/>
    <property type="evidence" value="ECO:0007669"/>
    <property type="project" value="InterPro"/>
</dbReference>
<dbReference type="GO" id="GO:0030295">
    <property type="term" value="F:protein kinase activator activity"/>
    <property type="evidence" value="ECO:0007669"/>
    <property type="project" value="TreeGrafter"/>
</dbReference>
<dbReference type="GO" id="GO:0007234">
    <property type="term" value="P:osmosensory signaling via phosphorelay pathway"/>
    <property type="evidence" value="ECO:0007669"/>
    <property type="project" value="TreeGrafter"/>
</dbReference>
<dbReference type="CDD" id="cd00082">
    <property type="entry name" value="HisKA"/>
    <property type="match status" value="1"/>
</dbReference>
<dbReference type="FunFam" id="3.30.565.10:FF:000072">
    <property type="entry name" value="Sensor histidine kinase GlrK"/>
    <property type="match status" value="1"/>
</dbReference>
<dbReference type="FunFam" id="1.10.287.130:FF:000039">
    <property type="entry name" value="Sensor-like histidine kinase YfhK"/>
    <property type="match status" value="1"/>
</dbReference>
<dbReference type="Gene3D" id="1.10.287.130">
    <property type="match status" value="1"/>
</dbReference>
<dbReference type="Gene3D" id="3.30.565.10">
    <property type="entry name" value="Histidine kinase-like ATPase, C-terminal domain"/>
    <property type="match status" value="1"/>
</dbReference>
<dbReference type="InterPro" id="IPR003660">
    <property type="entry name" value="HAMP_dom"/>
</dbReference>
<dbReference type="InterPro" id="IPR036890">
    <property type="entry name" value="HATPase_C_sf"/>
</dbReference>
<dbReference type="InterPro" id="IPR005467">
    <property type="entry name" value="His_kinase_dom"/>
</dbReference>
<dbReference type="InterPro" id="IPR003661">
    <property type="entry name" value="HisK_dim/P_dom"/>
</dbReference>
<dbReference type="InterPro" id="IPR036097">
    <property type="entry name" value="HisK_dim/P_sf"/>
</dbReference>
<dbReference type="InterPro" id="IPR052545">
    <property type="entry name" value="Light-responsive_reg"/>
</dbReference>
<dbReference type="InterPro" id="IPR004358">
    <property type="entry name" value="Sig_transdc_His_kin-like_C"/>
</dbReference>
<dbReference type="PANTHER" id="PTHR42878:SF7">
    <property type="entry name" value="SENSOR HISTIDINE KINASE GLRK"/>
    <property type="match status" value="1"/>
</dbReference>
<dbReference type="PANTHER" id="PTHR42878">
    <property type="entry name" value="TWO-COMPONENT HISTIDINE KINASE"/>
    <property type="match status" value="1"/>
</dbReference>
<dbReference type="Pfam" id="PF00672">
    <property type="entry name" value="HAMP"/>
    <property type="match status" value="1"/>
</dbReference>
<dbReference type="Pfam" id="PF02518">
    <property type="entry name" value="HATPase_c"/>
    <property type="match status" value="1"/>
</dbReference>
<dbReference type="Pfam" id="PF00512">
    <property type="entry name" value="HisKA"/>
    <property type="match status" value="1"/>
</dbReference>
<dbReference type="PRINTS" id="PR00344">
    <property type="entry name" value="BCTRLSENSOR"/>
</dbReference>
<dbReference type="SMART" id="SM00387">
    <property type="entry name" value="HATPase_c"/>
    <property type="match status" value="1"/>
</dbReference>
<dbReference type="SMART" id="SM00388">
    <property type="entry name" value="HisKA"/>
    <property type="match status" value="1"/>
</dbReference>
<dbReference type="SUPFAM" id="SSF55874">
    <property type="entry name" value="ATPase domain of HSP90 chaperone/DNA topoisomerase II/histidine kinase"/>
    <property type="match status" value="1"/>
</dbReference>
<dbReference type="SUPFAM" id="SSF47384">
    <property type="entry name" value="Homodimeric domain of signal transducing histidine kinase"/>
    <property type="match status" value="1"/>
</dbReference>
<dbReference type="PROSITE" id="PS50109">
    <property type="entry name" value="HIS_KIN"/>
    <property type="match status" value="1"/>
</dbReference>
<reference key="1">
    <citation type="journal article" date="2001" name="Nature">
        <title>Genome sequence of enterohaemorrhagic Escherichia coli O157:H7.</title>
        <authorList>
            <person name="Perna N.T."/>
            <person name="Plunkett G. III"/>
            <person name="Burland V."/>
            <person name="Mau B."/>
            <person name="Glasner J.D."/>
            <person name="Rose D.J."/>
            <person name="Mayhew G.F."/>
            <person name="Evans P.S."/>
            <person name="Gregor J."/>
            <person name="Kirkpatrick H.A."/>
            <person name="Posfai G."/>
            <person name="Hackett J."/>
            <person name="Klink S."/>
            <person name="Boutin A."/>
            <person name="Shao Y."/>
            <person name="Miller L."/>
            <person name="Grotbeck E.J."/>
            <person name="Davis N.W."/>
            <person name="Lim A."/>
            <person name="Dimalanta E.T."/>
            <person name="Potamousis K."/>
            <person name="Apodaca J."/>
            <person name="Anantharaman T.S."/>
            <person name="Lin J."/>
            <person name="Yen G."/>
            <person name="Schwartz D.C."/>
            <person name="Welch R.A."/>
            <person name="Blattner F.R."/>
        </authorList>
    </citation>
    <scope>NUCLEOTIDE SEQUENCE [LARGE SCALE GENOMIC DNA]</scope>
    <source>
        <strain>O157:H7 / EDL933 / ATCC 700927 / EHEC</strain>
    </source>
</reference>
<reference key="2">
    <citation type="journal article" date="2001" name="DNA Res.">
        <title>Complete genome sequence of enterohemorrhagic Escherichia coli O157:H7 and genomic comparison with a laboratory strain K-12.</title>
        <authorList>
            <person name="Hayashi T."/>
            <person name="Makino K."/>
            <person name="Ohnishi M."/>
            <person name="Kurokawa K."/>
            <person name="Ishii K."/>
            <person name="Yokoyama K."/>
            <person name="Han C.-G."/>
            <person name="Ohtsubo E."/>
            <person name="Nakayama K."/>
            <person name="Murata T."/>
            <person name="Tanaka M."/>
            <person name="Tobe T."/>
            <person name="Iida T."/>
            <person name="Takami H."/>
            <person name="Honda T."/>
            <person name="Sasakawa C."/>
            <person name="Ogasawara N."/>
            <person name="Yasunaga T."/>
            <person name="Kuhara S."/>
            <person name="Shiba T."/>
            <person name="Hattori M."/>
            <person name="Shinagawa H."/>
        </authorList>
    </citation>
    <scope>NUCLEOTIDE SEQUENCE [LARGE SCALE GENOMIC DNA]</scope>
    <source>
        <strain>O157:H7 / Sakai / RIMD 0509952 / EHEC</strain>
    </source>
</reference>
<reference key="3">
    <citation type="journal article" date="2007" name="J. Bacteriol.">
        <title>A novel two-component signaling system that activates transcription of an enterohemorrhagic Escherichia coli effector involved in remodeling of host actin.</title>
        <authorList>
            <person name="Reading N.C."/>
            <person name="Torres A.G."/>
            <person name="Kendall M.M."/>
            <person name="Hughes D.T."/>
            <person name="Yamamoto K."/>
            <person name="Sperandio V."/>
        </authorList>
    </citation>
    <scope>FUNCTION IN VIRULENCE</scope>
    <scope>INDUCTION</scope>
    <scope>DISRUPTION PHENOTYPE</scope>
    <source>
        <strain>O157:H7 / 86-24 / EHEC</strain>
    </source>
</reference>
<reference key="4">
    <citation type="journal article" date="2009" name="Proc. Natl. Acad. Sci. U.S.A.">
        <title>The two-component system QseEF and the membrane protein QseG link adrenergic and stress sensing to bacterial pathogenesis.</title>
        <authorList>
            <person name="Reading N.C."/>
            <person name="Rasko D.A."/>
            <person name="Torres A.G."/>
            <person name="Sperandio V."/>
        </authorList>
    </citation>
    <scope>FUNCTION</scope>
    <scope>AUTOPHOSPHORYLATION</scope>
    <scope>SUBCELLULAR LOCATION</scope>
    <source>
        <strain>O157:H7 / 86-24 / EHEC</strain>
    </source>
</reference>
<reference key="5">
    <citation type="journal article" date="2010" name="Microbiology">
        <title>A transcriptome study of the QseEF two-component system and the QseG membrane protein in enterohaemorrhagic Escherichia coli O157:H7.</title>
        <authorList>
            <person name="Reading N.C."/>
            <person name="Rasko D."/>
            <person name="Torres A.G."/>
            <person name="Sperandio V."/>
        </authorList>
    </citation>
    <scope>FUNCTION</scope>
    <source>
        <strain>O157:H7 / 86-24 / EHEC</strain>
    </source>
</reference>